<organism>
    <name type="scientific">Acinetobacter baumannii (strain ACICU)</name>
    <dbReference type="NCBI Taxonomy" id="405416"/>
    <lineage>
        <taxon>Bacteria</taxon>
        <taxon>Pseudomonadati</taxon>
        <taxon>Pseudomonadota</taxon>
        <taxon>Gammaproteobacteria</taxon>
        <taxon>Moraxellales</taxon>
        <taxon>Moraxellaceae</taxon>
        <taxon>Acinetobacter</taxon>
        <taxon>Acinetobacter calcoaceticus/baumannii complex</taxon>
    </lineage>
</organism>
<proteinExistence type="inferred from homology"/>
<feature type="chain" id="PRO_1000193777" description="Large ribosomal subunit protein bL19">
    <location>
        <begin position="1"/>
        <end position="122"/>
    </location>
</feature>
<name>RL19_ACIBC</name>
<reference key="1">
    <citation type="journal article" date="2008" name="Antimicrob. Agents Chemother.">
        <title>Whole-genome pyrosequencing of an epidemic multidrug-resistant Acinetobacter baumannii strain belonging to the European clone II group.</title>
        <authorList>
            <person name="Iacono M."/>
            <person name="Villa L."/>
            <person name="Fortini D."/>
            <person name="Bordoni R."/>
            <person name="Imperi F."/>
            <person name="Bonnal R.J."/>
            <person name="Sicheritz-Ponten T."/>
            <person name="De Bellis G."/>
            <person name="Visca P."/>
            <person name="Cassone A."/>
            <person name="Carattoli A."/>
        </authorList>
    </citation>
    <scope>NUCLEOTIDE SEQUENCE [LARGE SCALE GENOMIC DNA]</scope>
    <source>
        <strain>ACICU</strain>
    </source>
</reference>
<dbReference type="EMBL" id="CP000863">
    <property type="protein sequence ID" value="ACC58670.1"/>
    <property type="molecule type" value="Genomic_DNA"/>
</dbReference>
<dbReference type="RefSeq" id="WP_000014562.1">
    <property type="nucleotide sequence ID" value="NZ_CP031380.1"/>
</dbReference>
<dbReference type="SMR" id="B2HZV2"/>
<dbReference type="GeneID" id="92895396"/>
<dbReference type="KEGG" id="abc:ACICU_03360"/>
<dbReference type="HOGENOM" id="CLU_103507_2_2_6"/>
<dbReference type="Proteomes" id="UP000008839">
    <property type="component" value="Chromosome"/>
</dbReference>
<dbReference type="GO" id="GO:0022625">
    <property type="term" value="C:cytosolic large ribosomal subunit"/>
    <property type="evidence" value="ECO:0007669"/>
    <property type="project" value="TreeGrafter"/>
</dbReference>
<dbReference type="GO" id="GO:0003735">
    <property type="term" value="F:structural constituent of ribosome"/>
    <property type="evidence" value="ECO:0007669"/>
    <property type="project" value="InterPro"/>
</dbReference>
<dbReference type="GO" id="GO:0006412">
    <property type="term" value="P:translation"/>
    <property type="evidence" value="ECO:0007669"/>
    <property type="project" value="UniProtKB-UniRule"/>
</dbReference>
<dbReference type="FunFam" id="2.30.30.790:FF:000001">
    <property type="entry name" value="50S ribosomal protein L19"/>
    <property type="match status" value="1"/>
</dbReference>
<dbReference type="Gene3D" id="2.30.30.790">
    <property type="match status" value="1"/>
</dbReference>
<dbReference type="HAMAP" id="MF_00402">
    <property type="entry name" value="Ribosomal_bL19"/>
    <property type="match status" value="1"/>
</dbReference>
<dbReference type="InterPro" id="IPR001857">
    <property type="entry name" value="Ribosomal_bL19"/>
</dbReference>
<dbReference type="InterPro" id="IPR018257">
    <property type="entry name" value="Ribosomal_bL19_CS"/>
</dbReference>
<dbReference type="InterPro" id="IPR038657">
    <property type="entry name" value="Ribosomal_bL19_sf"/>
</dbReference>
<dbReference type="InterPro" id="IPR008991">
    <property type="entry name" value="Translation_prot_SH3-like_sf"/>
</dbReference>
<dbReference type="NCBIfam" id="TIGR01024">
    <property type="entry name" value="rplS_bact"/>
    <property type="match status" value="1"/>
</dbReference>
<dbReference type="PANTHER" id="PTHR15680:SF9">
    <property type="entry name" value="LARGE RIBOSOMAL SUBUNIT PROTEIN BL19M"/>
    <property type="match status" value="1"/>
</dbReference>
<dbReference type="PANTHER" id="PTHR15680">
    <property type="entry name" value="RIBOSOMAL PROTEIN L19"/>
    <property type="match status" value="1"/>
</dbReference>
<dbReference type="Pfam" id="PF01245">
    <property type="entry name" value="Ribosomal_L19"/>
    <property type="match status" value="1"/>
</dbReference>
<dbReference type="PIRSF" id="PIRSF002191">
    <property type="entry name" value="Ribosomal_L19"/>
    <property type="match status" value="1"/>
</dbReference>
<dbReference type="PRINTS" id="PR00061">
    <property type="entry name" value="RIBOSOMALL19"/>
</dbReference>
<dbReference type="SUPFAM" id="SSF50104">
    <property type="entry name" value="Translation proteins SH3-like domain"/>
    <property type="match status" value="1"/>
</dbReference>
<dbReference type="PROSITE" id="PS01015">
    <property type="entry name" value="RIBOSOMAL_L19"/>
    <property type="match status" value="1"/>
</dbReference>
<keyword id="KW-0687">Ribonucleoprotein</keyword>
<keyword id="KW-0689">Ribosomal protein</keyword>
<protein>
    <recommendedName>
        <fullName evidence="1">Large ribosomal subunit protein bL19</fullName>
    </recommendedName>
    <alternativeName>
        <fullName evidence="2">50S ribosomal protein L19</fullName>
    </alternativeName>
</protein>
<evidence type="ECO:0000255" key="1">
    <source>
        <dbReference type="HAMAP-Rule" id="MF_00402"/>
    </source>
</evidence>
<evidence type="ECO:0000305" key="2"/>
<accession>B2HZV2</accession>
<comment type="function">
    <text evidence="1">This protein is located at the 30S-50S ribosomal subunit interface and may play a role in the structure and function of the aminoacyl-tRNA binding site.</text>
</comment>
<comment type="similarity">
    <text evidence="1">Belongs to the bacterial ribosomal protein bL19 family.</text>
</comment>
<sequence>MSGKHPLVQAIENSQLKTDLPEFAPGDTVVVQVKVKEGDRERLQAFEGVVIAKKNRGLNSAFTVRKISSGVGVERVFQTHSPVVAKIEVKRRGDVRRAKLYYLRDLSGKAARIREKLPARKA</sequence>
<gene>
    <name evidence="1" type="primary">rplS</name>
    <name type="ordered locus">ACICU_03360</name>
</gene>